<protein>
    <recommendedName>
        <fullName evidence="4">Triggering receptor expressed on myeloid cells 3</fullName>
        <shortName evidence="4">TREM-3</shortName>
    </recommendedName>
</protein>
<accession>Q9JKE1</accession>
<name>TREM3_MOUSE</name>
<feature type="signal peptide" evidence="1">
    <location>
        <begin position="1"/>
        <end position="19"/>
    </location>
</feature>
<feature type="chain" id="PRO_5015099788" description="Triggering receptor expressed on myeloid cells 3" evidence="1">
    <location>
        <begin position="20"/>
        <end position="183"/>
    </location>
</feature>
<feature type="topological domain" description="Extracellular" evidence="5">
    <location>
        <begin position="20"/>
        <end position="138"/>
    </location>
</feature>
<feature type="transmembrane region" description="Helical" evidence="1">
    <location>
        <begin position="139"/>
        <end position="159"/>
    </location>
</feature>
<feature type="topological domain" description="Cytoplasmic" evidence="5">
    <location>
        <begin position="160"/>
        <end position="183"/>
    </location>
</feature>
<feature type="domain" description="Ig-like V-type" evidence="2">
    <location>
        <begin position="30"/>
        <end position="128"/>
    </location>
</feature>
<feature type="glycosylation site" description="N-linked (GlcNAc...) asparagine" evidence="1">
    <location>
        <position position="33"/>
    </location>
</feature>
<feature type="disulfide bond" evidence="2">
    <location>
        <begin position="38"/>
        <end position="110"/>
    </location>
</feature>
<comment type="function">
    <text evidence="3">Forms a receptor signaling complex with TYROBP/DAP12 which mediates activation of macrophages as part of the innate immune response.</text>
</comment>
<comment type="subunit">
    <text evidence="3">Interacts with TYROBP/DAP12.</text>
</comment>
<comment type="subcellular location">
    <subcellularLocation>
        <location evidence="3">Cell membrane</location>
        <topology evidence="1">Single-pass type I membrane protein</topology>
    </subcellularLocation>
</comment>
<comment type="tissue specificity">
    <text evidence="3">Expressed in macrophages and in T-cells.</text>
</comment>
<comment type="induction">
    <text evidence="3">Induced by lipopolysaccharide (LPS). Interferon gamma (IFNG) decreases expression.</text>
</comment>
<evidence type="ECO:0000255" key="1"/>
<evidence type="ECO:0000255" key="2">
    <source>
        <dbReference type="PROSITE-ProRule" id="PRU00114"/>
    </source>
</evidence>
<evidence type="ECO:0000269" key="3">
    <source>
    </source>
</evidence>
<evidence type="ECO:0000303" key="4">
    <source>
    </source>
</evidence>
<evidence type="ECO:0000305" key="5"/>
<evidence type="ECO:0000312" key="6">
    <source>
        <dbReference type="EMBL" id="AAF69835.1"/>
    </source>
</evidence>
<evidence type="ECO:0000312" key="7">
    <source>
        <dbReference type="EMBL" id="AAI27036.1"/>
    </source>
</evidence>
<evidence type="ECO:0000312" key="8">
    <source>
        <dbReference type="EMBL" id="BAC37636.1"/>
    </source>
</evidence>
<evidence type="ECO:0000312" key="9">
    <source>
        <dbReference type="EMBL" id="EDL23603.1"/>
    </source>
</evidence>
<evidence type="ECO:0000312" key="10">
    <source>
        <dbReference type="MGI" id="MGI:1930003"/>
    </source>
</evidence>
<evidence type="ECO:0000312" key="11">
    <source>
        <dbReference type="Proteomes" id="UP000000589"/>
    </source>
</evidence>
<keyword id="KW-1003">Cell membrane</keyword>
<keyword id="KW-1015">Disulfide bond</keyword>
<keyword id="KW-0325">Glycoprotein</keyword>
<keyword id="KW-0393">Immunoglobulin domain</keyword>
<keyword id="KW-0472">Membrane</keyword>
<keyword id="KW-0675">Receptor</keyword>
<keyword id="KW-1185">Reference proteome</keyword>
<keyword id="KW-0732">Signal</keyword>
<keyword id="KW-0812">Transmembrane</keyword>
<keyword id="KW-1133">Transmembrane helix</keyword>
<organism evidence="6">
    <name type="scientific">Mus musculus</name>
    <name type="common">Mouse</name>
    <dbReference type="NCBI Taxonomy" id="10090"/>
    <lineage>
        <taxon>Eukaryota</taxon>
        <taxon>Metazoa</taxon>
        <taxon>Chordata</taxon>
        <taxon>Craniata</taxon>
        <taxon>Vertebrata</taxon>
        <taxon>Euteleostomi</taxon>
        <taxon>Mammalia</taxon>
        <taxon>Eutheria</taxon>
        <taxon>Euarchontoglires</taxon>
        <taxon>Glires</taxon>
        <taxon>Rodentia</taxon>
        <taxon>Myomorpha</taxon>
        <taxon>Muroidea</taxon>
        <taxon>Muridae</taxon>
        <taxon>Murinae</taxon>
        <taxon>Mus</taxon>
        <taxon>Mus</taxon>
    </lineage>
</organism>
<sequence>MSPLLLWLGLMLCVSGLQAGDEEEHKCFLEGENLTLTCPYNIMLYSLSLKAWQRVRSHGSPETLVLTNTRKADFNVARAGKYLLEDYPTESVVKVTVTGLQRQDVGLYQCVVYLSPDNVIILRQRIRLAWCQGKPVMVIVLTCGFILNKGLVFSVLFVFLCKAGPKVLQPSKTSKVQGVSEKQ</sequence>
<reference evidence="6" key="1">
    <citation type="submission" date="2000-03" db="EMBL/GenBank/DDBJ databases">
        <authorList>
            <person name="Bouchon A."/>
            <person name="Colonna M."/>
        </authorList>
    </citation>
    <scope>NUCLEOTIDE SEQUENCE [MRNA]</scope>
</reference>
<reference evidence="8" key="2">
    <citation type="journal article" date="2005" name="Science">
        <title>The transcriptional landscape of the mammalian genome.</title>
        <authorList>
            <person name="Carninci P."/>
            <person name="Kasukawa T."/>
            <person name="Katayama S."/>
            <person name="Gough J."/>
            <person name="Frith M.C."/>
            <person name="Maeda N."/>
            <person name="Oyama R."/>
            <person name="Ravasi T."/>
            <person name="Lenhard B."/>
            <person name="Wells C."/>
            <person name="Kodzius R."/>
            <person name="Shimokawa K."/>
            <person name="Bajic V.B."/>
            <person name="Brenner S.E."/>
            <person name="Batalov S."/>
            <person name="Forrest A.R."/>
            <person name="Zavolan M."/>
            <person name="Davis M.J."/>
            <person name="Wilming L.G."/>
            <person name="Aidinis V."/>
            <person name="Allen J.E."/>
            <person name="Ambesi-Impiombato A."/>
            <person name="Apweiler R."/>
            <person name="Aturaliya R.N."/>
            <person name="Bailey T.L."/>
            <person name="Bansal M."/>
            <person name="Baxter L."/>
            <person name="Beisel K.W."/>
            <person name="Bersano T."/>
            <person name="Bono H."/>
            <person name="Chalk A.M."/>
            <person name="Chiu K.P."/>
            <person name="Choudhary V."/>
            <person name="Christoffels A."/>
            <person name="Clutterbuck D.R."/>
            <person name="Crowe M.L."/>
            <person name="Dalla E."/>
            <person name="Dalrymple B.P."/>
            <person name="de Bono B."/>
            <person name="Della Gatta G."/>
            <person name="di Bernardo D."/>
            <person name="Down T."/>
            <person name="Engstrom P."/>
            <person name="Fagiolini M."/>
            <person name="Faulkner G."/>
            <person name="Fletcher C.F."/>
            <person name="Fukushima T."/>
            <person name="Furuno M."/>
            <person name="Futaki S."/>
            <person name="Gariboldi M."/>
            <person name="Georgii-Hemming P."/>
            <person name="Gingeras T.R."/>
            <person name="Gojobori T."/>
            <person name="Green R.E."/>
            <person name="Gustincich S."/>
            <person name="Harbers M."/>
            <person name="Hayashi Y."/>
            <person name="Hensch T.K."/>
            <person name="Hirokawa N."/>
            <person name="Hill D."/>
            <person name="Huminiecki L."/>
            <person name="Iacono M."/>
            <person name="Ikeo K."/>
            <person name="Iwama A."/>
            <person name="Ishikawa T."/>
            <person name="Jakt M."/>
            <person name="Kanapin A."/>
            <person name="Katoh M."/>
            <person name="Kawasawa Y."/>
            <person name="Kelso J."/>
            <person name="Kitamura H."/>
            <person name="Kitano H."/>
            <person name="Kollias G."/>
            <person name="Krishnan S.P."/>
            <person name="Kruger A."/>
            <person name="Kummerfeld S.K."/>
            <person name="Kurochkin I.V."/>
            <person name="Lareau L.F."/>
            <person name="Lazarevic D."/>
            <person name="Lipovich L."/>
            <person name="Liu J."/>
            <person name="Liuni S."/>
            <person name="McWilliam S."/>
            <person name="Madan Babu M."/>
            <person name="Madera M."/>
            <person name="Marchionni L."/>
            <person name="Matsuda H."/>
            <person name="Matsuzawa S."/>
            <person name="Miki H."/>
            <person name="Mignone F."/>
            <person name="Miyake S."/>
            <person name="Morris K."/>
            <person name="Mottagui-Tabar S."/>
            <person name="Mulder N."/>
            <person name="Nakano N."/>
            <person name="Nakauchi H."/>
            <person name="Ng P."/>
            <person name="Nilsson R."/>
            <person name="Nishiguchi S."/>
            <person name="Nishikawa S."/>
            <person name="Nori F."/>
            <person name="Ohara O."/>
            <person name="Okazaki Y."/>
            <person name="Orlando V."/>
            <person name="Pang K.C."/>
            <person name="Pavan W.J."/>
            <person name="Pavesi G."/>
            <person name="Pesole G."/>
            <person name="Petrovsky N."/>
            <person name="Piazza S."/>
            <person name="Reed J."/>
            <person name="Reid J.F."/>
            <person name="Ring B.Z."/>
            <person name="Ringwald M."/>
            <person name="Rost B."/>
            <person name="Ruan Y."/>
            <person name="Salzberg S.L."/>
            <person name="Sandelin A."/>
            <person name="Schneider C."/>
            <person name="Schoenbach C."/>
            <person name="Sekiguchi K."/>
            <person name="Semple C.A."/>
            <person name="Seno S."/>
            <person name="Sessa L."/>
            <person name="Sheng Y."/>
            <person name="Shibata Y."/>
            <person name="Shimada H."/>
            <person name="Shimada K."/>
            <person name="Silva D."/>
            <person name="Sinclair B."/>
            <person name="Sperling S."/>
            <person name="Stupka E."/>
            <person name="Sugiura K."/>
            <person name="Sultana R."/>
            <person name="Takenaka Y."/>
            <person name="Taki K."/>
            <person name="Tammoja K."/>
            <person name="Tan S.L."/>
            <person name="Tang S."/>
            <person name="Taylor M.S."/>
            <person name="Tegner J."/>
            <person name="Teichmann S.A."/>
            <person name="Ueda H.R."/>
            <person name="van Nimwegen E."/>
            <person name="Verardo R."/>
            <person name="Wei C.L."/>
            <person name="Yagi K."/>
            <person name="Yamanishi H."/>
            <person name="Zabarovsky E."/>
            <person name="Zhu S."/>
            <person name="Zimmer A."/>
            <person name="Hide W."/>
            <person name="Bult C."/>
            <person name="Grimmond S.M."/>
            <person name="Teasdale R.D."/>
            <person name="Liu E.T."/>
            <person name="Brusic V."/>
            <person name="Quackenbush J."/>
            <person name="Wahlestedt C."/>
            <person name="Mattick J.S."/>
            <person name="Hume D.A."/>
            <person name="Kai C."/>
            <person name="Sasaki D."/>
            <person name="Tomaru Y."/>
            <person name="Fukuda S."/>
            <person name="Kanamori-Katayama M."/>
            <person name="Suzuki M."/>
            <person name="Aoki J."/>
            <person name="Arakawa T."/>
            <person name="Iida J."/>
            <person name="Imamura K."/>
            <person name="Itoh M."/>
            <person name="Kato T."/>
            <person name="Kawaji H."/>
            <person name="Kawagashira N."/>
            <person name="Kawashima T."/>
            <person name="Kojima M."/>
            <person name="Kondo S."/>
            <person name="Konno H."/>
            <person name="Nakano K."/>
            <person name="Ninomiya N."/>
            <person name="Nishio T."/>
            <person name="Okada M."/>
            <person name="Plessy C."/>
            <person name="Shibata K."/>
            <person name="Shiraki T."/>
            <person name="Suzuki S."/>
            <person name="Tagami M."/>
            <person name="Waki K."/>
            <person name="Watahiki A."/>
            <person name="Okamura-Oho Y."/>
            <person name="Suzuki H."/>
            <person name="Kawai J."/>
            <person name="Hayashizaki Y."/>
        </authorList>
    </citation>
    <scope>NUCLEOTIDE SEQUENCE [LARGE SCALE MRNA]</scope>
    <source>
        <strain>C57BL/6J</strain>
        <tissue>Bone</tissue>
    </source>
</reference>
<reference evidence="11" key="3">
    <citation type="journal article" date="2009" name="PLoS Biol.">
        <title>Lineage-specific biology revealed by a finished genome assembly of the mouse.</title>
        <authorList>
            <person name="Church D.M."/>
            <person name="Goodstadt L."/>
            <person name="Hillier L.W."/>
            <person name="Zody M.C."/>
            <person name="Goldstein S."/>
            <person name="She X."/>
            <person name="Bult C.J."/>
            <person name="Agarwala R."/>
            <person name="Cherry J.L."/>
            <person name="DiCuccio M."/>
            <person name="Hlavina W."/>
            <person name="Kapustin Y."/>
            <person name="Meric P."/>
            <person name="Maglott D."/>
            <person name="Birtle Z."/>
            <person name="Marques A.C."/>
            <person name="Graves T."/>
            <person name="Zhou S."/>
            <person name="Teague B."/>
            <person name="Potamousis K."/>
            <person name="Churas C."/>
            <person name="Place M."/>
            <person name="Herschleb J."/>
            <person name="Runnheim R."/>
            <person name="Forrest D."/>
            <person name="Amos-Landgraf J."/>
            <person name="Schwartz D.C."/>
            <person name="Cheng Z."/>
            <person name="Lindblad-Toh K."/>
            <person name="Eichler E.E."/>
            <person name="Ponting C.P."/>
        </authorList>
    </citation>
    <scope>NUCLEOTIDE SEQUENCE [LARGE SCALE GENOMIC DNA]</scope>
    <source>
        <strain>C57BL/6J</strain>
    </source>
</reference>
<reference evidence="9" key="4">
    <citation type="submission" date="2005-07" db="EMBL/GenBank/DDBJ databases">
        <authorList>
            <person name="Mural R.J."/>
            <person name="Adams M.D."/>
            <person name="Myers E.W."/>
            <person name="Smith H.O."/>
            <person name="Venter J.C."/>
        </authorList>
    </citation>
    <scope>NUCLEOTIDE SEQUENCE [LARGE SCALE GENOMIC DNA]</scope>
</reference>
<reference evidence="7" key="5">
    <citation type="journal article" date="2004" name="Genome Res.">
        <title>The status, quality, and expansion of the NIH full-length cDNA project: the Mammalian Gene Collection (MGC).</title>
        <authorList>
            <consortium name="The MGC Project Team"/>
        </authorList>
    </citation>
    <scope>NUCLEOTIDE SEQUENCE [LARGE SCALE MRNA]</scope>
</reference>
<reference evidence="5" key="6">
    <citation type="journal article" date="2002" name="Eur. J. Immunol.">
        <title>Characterization of TREM-3, an activating receptor on mouse macrophages: definition of a family of single Ig domain receptors on mouse chromosome 17.</title>
        <authorList>
            <person name="Chung D.H."/>
            <person name="Seaman W.E."/>
            <person name="Daws M.R."/>
        </authorList>
    </citation>
    <scope>FUNCTION</scope>
    <scope>SUBUNIT</scope>
    <scope>INTERACTION WITH TYROBP</scope>
    <scope>SUBCELLULAR LOCATION</scope>
    <scope>TISSUE SPECIFICITY</scope>
    <scope>INDUCTION</scope>
</reference>
<dbReference type="EMBL" id="AF241220">
    <property type="protein sequence ID" value="AAF69835.1"/>
    <property type="molecule type" value="mRNA"/>
</dbReference>
<dbReference type="EMBL" id="AK079407">
    <property type="protein sequence ID" value="BAC37636.1"/>
    <property type="molecule type" value="mRNA"/>
</dbReference>
<dbReference type="EMBL" id="AC241601">
    <property type="status" value="NOT_ANNOTATED_CDS"/>
    <property type="molecule type" value="Genomic_DNA"/>
</dbReference>
<dbReference type="EMBL" id="CH466559">
    <property type="protein sequence ID" value="EDL23603.1"/>
    <property type="molecule type" value="Genomic_DNA"/>
</dbReference>
<dbReference type="EMBL" id="BC127035">
    <property type="protein sequence ID" value="AAI27036.1"/>
    <property type="molecule type" value="mRNA"/>
</dbReference>
<dbReference type="EMBL" id="BC127036">
    <property type="protein sequence ID" value="AAI27037.1"/>
    <property type="molecule type" value="mRNA"/>
</dbReference>
<dbReference type="CCDS" id="CCDS28861.1"/>
<dbReference type="RefSeq" id="NP_067382.1">
    <property type="nucleotide sequence ID" value="NM_021407.3"/>
</dbReference>
<dbReference type="SMR" id="Q9JKE1"/>
<dbReference type="FunCoup" id="Q9JKE1">
    <property type="interactions" value="241"/>
</dbReference>
<dbReference type="STRING" id="10090.ENSMUSP00000044478"/>
<dbReference type="GlyCosmos" id="Q9JKE1">
    <property type="glycosylation" value="1 site, No reported glycans"/>
</dbReference>
<dbReference type="GlyGen" id="Q9JKE1">
    <property type="glycosylation" value="1 site"/>
</dbReference>
<dbReference type="PaxDb" id="10090-ENSMUSP00000044478"/>
<dbReference type="DNASU" id="58218"/>
<dbReference type="Ensembl" id="ENSMUST00000048065.6">
    <property type="protein sequence ID" value="ENSMUSP00000044478.6"/>
    <property type="gene ID" value="ENSMUSG00000041754.6"/>
</dbReference>
<dbReference type="GeneID" id="58218"/>
<dbReference type="KEGG" id="mmu:58218"/>
<dbReference type="UCSC" id="uc008cwy.2">
    <property type="organism name" value="mouse"/>
</dbReference>
<dbReference type="AGR" id="MGI:1930003"/>
<dbReference type="CTD" id="58218"/>
<dbReference type="MGI" id="MGI:1930003">
    <property type="gene designation" value="Trem3"/>
</dbReference>
<dbReference type="VEuPathDB" id="HostDB:ENSMUSG00000041754"/>
<dbReference type="eggNOG" id="ENOG502TE0T">
    <property type="taxonomic scope" value="Eukaryota"/>
</dbReference>
<dbReference type="GeneTree" id="ENSGT00470000042299"/>
<dbReference type="HOGENOM" id="CLU_110755_0_0_1"/>
<dbReference type="InParanoid" id="Q9JKE1"/>
<dbReference type="OMA" id="VLTCGFI"/>
<dbReference type="OrthoDB" id="8959642at2759"/>
<dbReference type="PhylomeDB" id="Q9JKE1"/>
<dbReference type="TreeFam" id="TF339293"/>
<dbReference type="BioGRID-ORCS" id="58218">
    <property type="hits" value="3 hits in 77 CRISPR screens"/>
</dbReference>
<dbReference type="PRO" id="PR:Q9JKE1"/>
<dbReference type="Proteomes" id="UP000000589">
    <property type="component" value="Chromosome 17"/>
</dbReference>
<dbReference type="RNAct" id="Q9JKE1">
    <property type="molecule type" value="protein"/>
</dbReference>
<dbReference type="Bgee" id="ENSMUSG00000041754">
    <property type="expression patterns" value="Expressed in granulocyte and 17 other cell types or tissues"/>
</dbReference>
<dbReference type="GO" id="GO:0005886">
    <property type="term" value="C:plasma membrane"/>
    <property type="evidence" value="ECO:0007669"/>
    <property type="project" value="UniProtKB-SubCell"/>
</dbReference>
<dbReference type="GO" id="GO:0016477">
    <property type="term" value="P:cell migration"/>
    <property type="evidence" value="ECO:0000316"/>
    <property type="project" value="MGI"/>
</dbReference>
<dbReference type="GO" id="GO:0030593">
    <property type="term" value="P:neutrophil chemotaxis"/>
    <property type="evidence" value="ECO:0000316"/>
    <property type="project" value="MGI"/>
</dbReference>
<dbReference type="GO" id="GO:0072672">
    <property type="term" value="P:neutrophil extravasation"/>
    <property type="evidence" value="ECO:0000316"/>
    <property type="project" value="MGI"/>
</dbReference>
<dbReference type="GO" id="GO:0070945">
    <property type="term" value="P:neutrophil-mediated killing of gram-negative bacterium"/>
    <property type="evidence" value="ECO:0000316"/>
    <property type="project" value="MGI"/>
</dbReference>
<dbReference type="GO" id="GO:0045089">
    <property type="term" value="P:positive regulation of innate immune response"/>
    <property type="evidence" value="ECO:0000314"/>
    <property type="project" value="UniProtKB"/>
</dbReference>
<dbReference type="Gene3D" id="2.60.40.10">
    <property type="entry name" value="Immunoglobulins"/>
    <property type="match status" value="1"/>
</dbReference>
<dbReference type="InterPro" id="IPR036179">
    <property type="entry name" value="Ig-like_dom_sf"/>
</dbReference>
<dbReference type="InterPro" id="IPR013783">
    <property type="entry name" value="Ig-like_fold"/>
</dbReference>
<dbReference type="InterPro" id="IPR013106">
    <property type="entry name" value="Ig_V-set"/>
</dbReference>
<dbReference type="PANTHER" id="PTHR19357">
    <property type="entry name" value="TRIGGERING RECEPTOR EXPRESSED ON MYELOID CELLS 1"/>
    <property type="match status" value="1"/>
</dbReference>
<dbReference type="PANTHER" id="PTHR19357:SF2">
    <property type="entry name" value="TRIGGERING RECEPTOR EXPRESSED ON MYELOID CELLS 3"/>
    <property type="match status" value="1"/>
</dbReference>
<dbReference type="Pfam" id="PF07686">
    <property type="entry name" value="V-set"/>
    <property type="match status" value="1"/>
</dbReference>
<dbReference type="SUPFAM" id="SSF48726">
    <property type="entry name" value="Immunoglobulin"/>
    <property type="match status" value="1"/>
</dbReference>
<gene>
    <name evidence="4 10" type="primary">Trem3</name>
</gene>
<proteinExistence type="evidence at protein level"/>